<proteinExistence type="inferred from homology"/>
<protein>
    <recommendedName>
        <fullName evidence="2">Guanylate kinase</fullName>
        <ecNumber evidence="2">2.7.4.8</ecNumber>
    </recommendedName>
    <alternativeName>
        <fullName evidence="2">GMP kinase</fullName>
    </alternativeName>
</protein>
<organism>
    <name type="scientific">Parasynechococcus marenigrum (strain WH8102)</name>
    <dbReference type="NCBI Taxonomy" id="84588"/>
    <lineage>
        <taxon>Bacteria</taxon>
        <taxon>Bacillati</taxon>
        <taxon>Cyanobacteriota</taxon>
        <taxon>Cyanophyceae</taxon>
        <taxon>Synechococcales</taxon>
        <taxon>Prochlorococcaceae</taxon>
        <taxon>Parasynechococcus</taxon>
        <taxon>Parasynechococcus marenigrum</taxon>
    </lineage>
</organism>
<feature type="chain" id="PRO_0000170628" description="Guanylate kinase">
    <location>
        <begin position="1"/>
        <end position="182"/>
    </location>
</feature>
<feature type="domain" description="Guanylate kinase-like" evidence="2">
    <location>
        <begin position="2"/>
        <end position="180"/>
    </location>
</feature>
<feature type="binding site" evidence="2">
    <location>
        <begin position="9"/>
        <end position="16"/>
    </location>
    <ligand>
        <name>ATP</name>
        <dbReference type="ChEBI" id="CHEBI:30616"/>
    </ligand>
</feature>
<evidence type="ECO:0000250" key="1">
    <source>
        <dbReference type="UniProtKB" id="Q9KNM4"/>
    </source>
</evidence>
<evidence type="ECO:0000255" key="2">
    <source>
        <dbReference type="HAMAP-Rule" id="MF_00328"/>
    </source>
</evidence>
<reference key="1">
    <citation type="journal article" date="2003" name="Nature">
        <title>The genome of a motile marine Synechococcus.</title>
        <authorList>
            <person name="Palenik B."/>
            <person name="Brahamsha B."/>
            <person name="Larimer F.W."/>
            <person name="Land M.L."/>
            <person name="Hauser L."/>
            <person name="Chain P."/>
            <person name="Lamerdin J.E."/>
            <person name="Regala W."/>
            <person name="Allen E.E."/>
            <person name="McCarren J."/>
            <person name="Paulsen I.T."/>
            <person name="Dufresne A."/>
            <person name="Partensky F."/>
            <person name="Webb E.A."/>
            <person name="Waterbury J."/>
        </authorList>
    </citation>
    <scope>NUCLEOTIDE SEQUENCE [LARGE SCALE GENOMIC DNA]</scope>
    <source>
        <strain>WH8102</strain>
    </source>
</reference>
<accession>Q7U570</accession>
<sequence>MGTLTVITGPSGVGKGTLVQRLLARNPSIWVSVSATTRAPREGEREGESYFFHSRERFDALVQEGGLLEWAEFAGNCYGTPRAPVEQQLQAGRPVLLEIELEGARQVRRSFSKARQIFLAPPSFEELERRIRGRGTDSEDAIQQRLLRAREELSAQGEFDAVVVNDDLDQALLKLEGLMGLG</sequence>
<comment type="function">
    <text evidence="2">Essential for recycling GMP and indirectly, cGMP.</text>
</comment>
<comment type="function">
    <text evidence="1">(Microbial infection) Catalyzes the phosphorylation of dZMP to dZDP, when the bacterium is infected by a phage that produces the substrate for the synthesis of dZTP (2- amino-2'-deoxyadenosine 5'-triphosphate), which is then used by the phage as a DNA polymerase substrate.</text>
</comment>
<comment type="catalytic activity">
    <reaction evidence="2">
        <text>GMP + ATP = GDP + ADP</text>
        <dbReference type="Rhea" id="RHEA:20780"/>
        <dbReference type="ChEBI" id="CHEBI:30616"/>
        <dbReference type="ChEBI" id="CHEBI:58115"/>
        <dbReference type="ChEBI" id="CHEBI:58189"/>
        <dbReference type="ChEBI" id="CHEBI:456216"/>
        <dbReference type="EC" id="2.7.4.8"/>
    </reaction>
</comment>
<comment type="catalytic activity">
    <reaction evidence="1">
        <text>dZMP + ATP = dZDP + ADP</text>
        <dbReference type="Rhea" id="RHEA:67640"/>
        <dbReference type="ChEBI" id="CHEBI:30616"/>
        <dbReference type="ChEBI" id="CHEBI:172927"/>
        <dbReference type="ChEBI" id="CHEBI:172929"/>
        <dbReference type="ChEBI" id="CHEBI:456216"/>
    </reaction>
</comment>
<comment type="pathway">
    <text evidence="1">Purine metabolism.</text>
</comment>
<comment type="subcellular location">
    <subcellularLocation>
        <location evidence="2">Cytoplasm</location>
    </subcellularLocation>
</comment>
<comment type="similarity">
    <text evidence="2">Belongs to the guanylate kinase family.</text>
</comment>
<dbReference type="EC" id="2.7.4.8" evidence="2"/>
<dbReference type="EMBL" id="BX569694">
    <property type="protein sequence ID" value="CAE08352.1"/>
    <property type="molecule type" value="Genomic_DNA"/>
</dbReference>
<dbReference type="RefSeq" id="WP_011128695.1">
    <property type="nucleotide sequence ID" value="NC_005070.1"/>
</dbReference>
<dbReference type="SMR" id="Q7U570"/>
<dbReference type="STRING" id="84588.SYNW1837"/>
<dbReference type="KEGG" id="syw:SYNW1837"/>
<dbReference type="eggNOG" id="COG0194">
    <property type="taxonomic scope" value="Bacteria"/>
</dbReference>
<dbReference type="HOGENOM" id="CLU_001715_1_1_3"/>
<dbReference type="Proteomes" id="UP000001422">
    <property type="component" value="Chromosome"/>
</dbReference>
<dbReference type="GO" id="GO:0005829">
    <property type="term" value="C:cytosol"/>
    <property type="evidence" value="ECO:0007669"/>
    <property type="project" value="TreeGrafter"/>
</dbReference>
<dbReference type="GO" id="GO:0005524">
    <property type="term" value="F:ATP binding"/>
    <property type="evidence" value="ECO:0007669"/>
    <property type="project" value="UniProtKB-UniRule"/>
</dbReference>
<dbReference type="GO" id="GO:0004385">
    <property type="term" value="F:guanylate kinase activity"/>
    <property type="evidence" value="ECO:0007669"/>
    <property type="project" value="UniProtKB-UniRule"/>
</dbReference>
<dbReference type="CDD" id="cd00071">
    <property type="entry name" value="GMPK"/>
    <property type="match status" value="1"/>
</dbReference>
<dbReference type="FunFam" id="3.30.63.10:FF:000002">
    <property type="entry name" value="Guanylate kinase 1"/>
    <property type="match status" value="1"/>
</dbReference>
<dbReference type="Gene3D" id="3.30.63.10">
    <property type="entry name" value="Guanylate Kinase phosphate binding domain"/>
    <property type="match status" value="1"/>
</dbReference>
<dbReference type="Gene3D" id="3.40.50.300">
    <property type="entry name" value="P-loop containing nucleotide triphosphate hydrolases"/>
    <property type="match status" value="1"/>
</dbReference>
<dbReference type="HAMAP" id="MF_00328">
    <property type="entry name" value="Guanylate_kinase"/>
    <property type="match status" value="1"/>
</dbReference>
<dbReference type="InterPro" id="IPR008145">
    <property type="entry name" value="GK/Ca_channel_bsu"/>
</dbReference>
<dbReference type="InterPro" id="IPR008144">
    <property type="entry name" value="Guanylate_kin-like_dom"/>
</dbReference>
<dbReference type="InterPro" id="IPR017665">
    <property type="entry name" value="Guanylate_kinase"/>
</dbReference>
<dbReference type="InterPro" id="IPR020590">
    <property type="entry name" value="Guanylate_kinase_CS"/>
</dbReference>
<dbReference type="InterPro" id="IPR027417">
    <property type="entry name" value="P-loop_NTPase"/>
</dbReference>
<dbReference type="NCBIfam" id="TIGR03263">
    <property type="entry name" value="guanyl_kin"/>
    <property type="match status" value="1"/>
</dbReference>
<dbReference type="PANTHER" id="PTHR23117:SF13">
    <property type="entry name" value="GUANYLATE KINASE"/>
    <property type="match status" value="1"/>
</dbReference>
<dbReference type="PANTHER" id="PTHR23117">
    <property type="entry name" value="GUANYLATE KINASE-RELATED"/>
    <property type="match status" value="1"/>
</dbReference>
<dbReference type="Pfam" id="PF00625">
    <property type="entry name" value="Guanylate_kin"/>
    <property type="match status" value="1"/>
</dbReference>
<dbReference type="SMART" id="SM00072">
    <property type="entry name" value="GuKc"/>
    <property type="match status" value="1"/>
</dbReference>
<dbReference type="SUPFAM" id="SSF52540">
    <property type="entry name" value="P-loop containing nucleoside triphosphate hydrolases"/>
    <property type="match status" value="1"/>
</dbReference>
<dbReference type="PROSITE" id="PS00856">
    <property type="entry name" value="GUANYLATE_KINASE_1"/>
    <property type="match status" value="1"/>
</dbReference>
<dbReference type="PROSITE" id="PS50052">
    <property type="entry name" value="GUANYLATE_KINASE_2"/>
    <property type="match status" value="1"/>
</dbReference>
<gene>
    <name evidence="2" type="primary">gmk</name>
    <name type="ordered locus">SYNW1837</name>
</gene>
<name>KGUA_PARMW</name>
<keyword id="KW-0067">ATP-binding</keyword>
<keyword id="KW-0963">Cytoplasm</keyword>
<keyword id="KW-0418">Kinase</keyword>
<keyword id="KW-0547">Nucleotide-binding</keyword>
<keyword id="KW-0808">Transferase</keyword>